<name>METE_BACAC</name>
<keyword id="KW-0028">Amino-acid biosynthesis</keyword>
<keyword id="KW-0479">Metal-binding</keyword>
<keyword id="KW-0486">Methionine biosynthesis</keyword>
<keyword id="KW-0489">Methyltransferase</keyword>
<keyword id="KW-0677">Repeat</keyword>
<keyword id="KW-0808">Transferase</keyword>
<keyword id="KW-0862">Zinc</keyword>
<protein>
    <recommendedName>
        <fullName evidence="1">5-methyltetrahydropteroyltriglutamate--homocysteine methyltransferase</fullName>
        <ecNumber evidence="1">2.1.1.14</ecNumber>
    </recommendedName>
    <alternativeName>
        <fullName evidence="1">Cobalamin-independent methionine synthase</fullName>
    </alternativeName>
    <alternativeName>
        <fullName evidence="1">Methionine synthase, vitamin-B12 independent isozyme</fullName>
    </alternativeName>
</protein>
<evidence type="ECO:0000255" key="1">
    <source>
        <dbReference type="HAMAP-Rule" id="MF_00172"/>
    </source>
</evidence>
<gene>
    <name evidence="1" type="primary">metE</name>
    <name type="ordered locus">BAMEG_4259</name>
</gene>
<reference key="1">
    <citation type="submission" date="2008-10" db="EMBL/GenBank/DDBJ databases">
        <title>Genome sequence of Bacillus anthracis str. CDC 684.</title>
        <authorList>
            <person name="Dodson R.J."/>
            <person name="Munk A.C."/>
            <person name="Brettin T."/>
            <person name="Bruce D."/>
            <person name="Detter C."/>
            <person name="Tapia R."/>
            <person name="Han C."/>
            <person name="Sutton G."/>
            <person name="Sims D."/>
        </authorList>
    </citation>
    <scope>NUCLEOTIDE SEQUENCE [LARGE SCALE GENOMIC DNA]</scope>
    <source>
        <strain>CDC 684 / NRRL 3495</strain>
    </source>
</reference>
<dbReference type="EC" id="2.1.1.14" evidence="1"/>
<dbReference type="EMBL" id="CP001215">
    <property type="protein sequence ID" value="ACP14166.1"/>
    <property type="molecule type" value="Genomic_DNA"/>
</dbReference>
<dbReference type="RefSeq" id="WP_001007637.1">
    <property type="nucleotide sequence ID" value="NC_012581.1"/>
</dbReference>
<dbReference type="SMR" id="C3LI71"/>
<dbReference type="KEGG" id="bah:BAMEG_4259"/>
<dbReference type="HOGENOM" id="CLU_013175_0_0_9"/>
<dbReference type="UniPathway" id="UPA00051">
    <property type="reaction ID" value="UER00082"/>
</dbReference>
<dbReference type="GO" id="GO:0003871">
    <property type="term" value="F:5-methyltetrahydropteroyltriglutamate-homocysteine S-methyltransferase activity"/>
    <property type="evidence" value="ECO:0007669"/>
    <property type="project" value="UniProtKB-UniRule"/>
</dbReference>
<dbReference type="GO" id="GO:0008270">
    <property type="term" value="F:zinc ion binding"/>
    <property type="evidence" value="ECO:0007669"/>
    <property type="project" value="InterPro"/>
</dbReference>
<dbReference type="GO" id="GO:0009086">
    <property type="term" value="P:methionine biosynthetic process"/>
    <property type="evidence" value="ECO:0007669"/>
    <property type="project" value="UniProtKB-UniRule"/>
</dbReference>
<dbReference type="GO" id="GO:0032259">
    <property type="term" value="P:methylation"/>
    <property type="evidence" value="ECO:0007669"/>
    <property type="project" value="UniProtKB-KW"/>
</dbReference>
<dbReference type="CDD" id="cd03311">
    <property type="entry name" value="CIMS_C_terminal_like"/>
    <property type="match status" value="1"/>
</dbReference>
<dbReference type="CDD" id="cd03312">
    <property type="entry name" value="CIMS_N_terminal_like"/>
    <property type="match status" value="1"/>
</dbReference>
<dbReference type="Gene3D" id="3.20.20.210">
    <property type="match status" value="2"/>
</dbReference>
<dbReference type="HAMAP" id="MF_00172">
    <property type="entry name" value="Meth_synth"/>
    <property type="match status" value="1"/>
</dbReference>
<dbReference type="InterPro" id="IPR013215">
    <property type="entry name" value="Cbl-indep_Met_Synth_N"/>
</dbReference>
<dbReference type="InterPro" id="IPR006276">
    <property type="entry name" value="Cobalamin-indep_Met_synthase"/>
</dbReference>
<dbReference type="InterPro" id="IPR002629">
    <property type="entry name" value="Met_Synth_C/arc"/>
</dbReference>
<dbReference type="InterPro" id="IPR038071">
    <property type="entry name" value="UROD/MetE-like_sf"/>
</dbReference>
<dbReference type="NCBIfam" id="TIGR01371">
    <property type="entry name" value="met_syn_B12ind"/>
    <property type="match status" value="1"/>
</dbReference>
<dbReference type="NCBIfam" id="NF003556">
    <property type="entry name" value="PRK05222.1"/>
    <property type="match status" value="1"/>
</dbReference>
<dbReference type="PANTHER" id="PTHR30519">
    <property type="entry name" value="5-METHYLTETRAHYDROPTEROYLTRIGLUTAMATE--HOMOCYSTEINE METHYLTRANSFERASE"/>
    <property type="match status" value="1"/>
</dbReference>
<dbReference type="Pfam" id="PF08267">
    <property type="entry name" value="Meth_synt_1"/>
    <property type="match status" value="1"/>
</dbReference>
<dbReference type="Pfam" id="PF01717">
    <property type="entry name" value="Meth_synt_2"/>
    <property type="match status" value="1"/>
</dbReference>
<dbReference type="PIRSF" id="PIRSF000382">
    <property type="entry name" value="MeTrfase_B12_ind"/>
    <property type="match status" value="1"/>
</dbReference>
<dbReference type="SUPFAM" id="SSF51726">
    <property type="entry name" value="UROD/MetE-like"/>
    <property type="match status" value="2"/>
</dbReference>
<proteinExistence type="inferred from homology"/>
<sequence length="762" mass="87218">MAIQTSNLGYPRIGLQREWKKTLEAFWSNKINEEQFLTTMKEIRLQHVKVQQEKGIELIPIGDFTYYDHVLDTAYMLGFIPSRFSEFTSYLDVYFAMARGSKDHVASEMTKWFNTNYHYIVPEYEEGLQISLKDNRPLRLYEEAKQELGVDGKPVILGPYTFLKLAKGYTQEQFATILKQLVAPYVQLLSELHAAGAQIIQVDEPIFASLTKEEVQQAKEIYEAIRKEVPNATLLLQTYFDSVEENYEEIITFPVSSIGLDFVHGKEGNLNAVSKYGFPADKTLAVGCIDGRNIWRADLDEVLTLFTTLQKQVQTKDLIVQPSCSLLHTPIDKTEETHLSTELFDALAFANQKLEELVLIHSALTQGTESISNELETYRNVHHTIRSSAARNREDVKAARTALKEEDFSRPLPFEKRYELQQVALKLPLLPTTTIGSFPQTTEVRQTRKEWRNGIISNEQYEQFIEKETEKWIRYQEEIGLDVLVHGEFERTDMVEYFGERLAGFSFTKNGWVQSYGSRCVKPPVIYGDVAFINGMTIKETVYAQSLTEKVVKGMLTGPVTILNWSFVRNDIPRKEVSYQIALALRHEIELLESSGIRVIQVDEPALREGMPLKEKDWDAYITWAVQSFLLATSSVANETQIHTHMCYSNFEDIVDAIRALDADVISIETSRSHGEFIDTLKHTTYEKGIGLGVYDIHSPRVPSKDEMYKIVEQSLQVCDPKYFWINPDCGLKTRRTEEVIPALEHMVQAAKDARSLLKTNA</sequence>
<feature type="chain" id="PRO_1000203707" description="5-methyltetrahydropteroyltriglutamate--homocysteine methyltransferase">
    <location>
        <begin position="1"/>
        <end position="762"/>
    </location>
</feature>
<feature type="active site" description="Proton donor" evidence="1">
    <location>
        <position position="698"/>
    </location>
</feature>
<feature type="binding site" evidence="1">
    <location>
        <begin position="17"/>
        <end position="20"/>
    </location>
    <ligand>
        <name>5-methyltetrahydropteroyltri-L-glutamate</name>
        <dbReference type="ChEBI" id="CHEBI:58207"/>
    </ligand>
</feature>
<feature type="binding site" evidence="1">
    <location>
        <position position="111"/>
    </location>
    <ligand>
        <name>5-methyltetrahydropteroyltri-L-glutamate</name>
        <dbReference type="ChEBI" id="CHEBI:58207"/>
    </ligand>
</feature>
<feature type="binding site" evidence="1">
    <location>
        <begin position="435"/>
        <end position="437"/>
    </location>
    <ligand>
        <name>L-homocysteine</name>
        <dbReference type="ChEBI" id="CHEBI:58199"/>
    </ligand>
</feature>
<feature type="binding site" evidence="1">
    <location>
        <begin position="435"/>
        <end position="437"/>
    </location>
    <ligand>
        <name>L-methionine</name>
        <dbReference type="ChEBI" id="CHEBI:57844"/>
    </ligand>
</feature>
<feature type="binding site" evidence="1">
    <location>
        <position position="488"/>
    </location>
    <ligand>
        <name>L-homocysteine</name>
        <dbReference type="ChEBI" id="CHEBI:58199"/>
    </ligand>
</feature>
<feature type="binding site" evidence="1">
    <location>
        <position position="488"/>
    </location>
    <ligand>
        <name>L-methionine</name>
        <dbReference type="ChEBI" id="CHEBI:57844"/>
    </ligand>
</feature>
<feature type="binding site" evidence="1">
    <location>
        <begin position="519"/>
        <end position="520"/>
    </location>
    <ligand>
        <name>5-methyltetrahydropteroyltri-L-glutamate</name>
        <dbReference type="ChEBI" id="CHEBI:58207"/>
    </ligand>
</feature>
<feature type="binding site" evidence="1">
    <location>
        <position position="565"/>
    </location>
    <ligand>
        <name>5-methyltetrahydropteroyltri-L-glutamate</name>
        <dbReference type="ChEBI" id="CHEBI:58207"/>
    </ligand>
</feature>
<feature type="binding site" evidence="1">
    <location>
        <position position="603"/>
    </location>
    <ligand>
        <name>L-homocysteine</name>
        <dbReference type="ChEBI" id="CHEBI:58199"/>
    </ligand>
</feature>
<feature type="binding site" evidence="1">
    <location>
        <position position="603"/>
    </location>
    <ligand>
        <name>L-methionine</name>
        <dbReference type="ChEBI" id="CHEBI:57844"/>
    </ligand>
</feature>
<feature type="binding site" evidence="1">
    <location>
        <position position="609"/>
    </location>
    <ligand>
        <name>5-methyltetrahydropteroyltri-L-glutamate</name>
        <dbReference type="ChEBI" id="CHEBI:58207"/>
    </ligand>
</feature>
<feature type="binding site" evidence="1">
    <location>
        <position position="645"/>
    </location>
    <ligand>
        <name>Zn(2+)</name>
        <dbReference type="ChEBI" id="CHEBI:29105"/>
        <note>catalytic</note>
    </ligand>
</feature>
<feature type="binding site" evidence="1">
    <location>
        <position position="647"/>
    </location>
    <ligand>
        <name>Zn(2+)</name>
        <dbReference type="ChEBI" id="CHEBI:29105"/>
        <note>catalytic</note>
    </ligand>
</feature>
<feature type="binding site" evidence="1">
    <location>
        <position position="669"/>
    </location>
    <ligand>
        <name>Zn(2+)</name>
        <dbReference type="ChEBI" id="CHEBI:29105"/>
        <note>catalytic</note>
    </ligand>
</feature>
<feature type="binding site" evidence="1">
    <location>
        <position position="730"/>
    </location>
    <ligand>
        <name>Zn(2+)</name>
        <dbReference type="ChEBI" id="CHEBI:29105"/>
        <note>catalytic</note>
    </ligand>
</feature>
<accession>C3LI71</accession>
<organism>
    <name type="scientific">Bacillus anthracis (strain CDC 684 / NRRL 3495)</name>
    <dbReference type="NCBI Taxonomy" id="568206"/>
    <lineage>
        <taxon>Bacteria</taxon>
        <taxon>Bacillati</taxon>
        <taxon>Bacillota</taxon>
        <taxon>Bacilli</taxon>
        <taxon>Bacillales</taxon>
        <taxon>Bacillaceae</taxon>
        <taxon>Bacillus</taxon>
        <taxon>Bacillus cereus group</taxon>
    </lineage>
</organism>
<comment type="function">
    <text evidence="1">Catalyzes the transfer of a methyl group from 5-methyltetrahydrofolate to homocysteine resulting in methionine formation.</text>
</comment>
<comment type="catalytic activity">
    <reaction evidence="1">
        <text>5-methyltetrahydropteroyltri-L-glutamate + L-homocysteine = tetrahydropteroyltri-L-glutamate + L-methionine</text>
        <dbReference type="Rhea" id="RHEA:21196"/>
        <dbReference type="ChEBI" id="CHEBI:57844"/>
        <dbReference type="ChEBI" id="CHEBI:58140"/>
        <dbReference type="ChEBI" id="CHEBI:58199"/>
        <dbReference type="ChEBI" id="CHEBI:58207"/>
        <dbReference type="EC" id="2.1.1.14"/>
    </reaction>
</comment>
<comment type="cofactor">
    <cofactor evidence="1">
        <name>Zn(2+)</name>
        <dbReference type="ChEBI" id="CHEBI:29105"/>
    </cofactor>
    <text evidence="1">Binds 1 zinc ion per subunit.</text>
</comment>
<comment type="pathway">
    <text evidence="1">Amino-acid biosynthesis; L-methionine biosynthesis via de novo pathway; L-methionine from L-homocysteine (MetE route): step 1/1.</text>
</comment>
<comment type="similarity">
    <text evidence="1">Belongs to the vitamin-B12 independent methionine synthase family.</text>
</comment>